<accession>Q99TF3</accession>
<gene>
    <name type="ordered locus">SAV1710</name>
</gene>
<feature type="chain" id="PRO_0000288893" description="Putative universal stress protein SAV1710">
    <location>
        <begin position="1"/>
        <end position="166"/>
    </location>
</feature>
<sequence>MITYKNILIAVDGSHEAEWAFNRAVGVAKRNDAKLTIVNVIDSRTYSSYEVYDAQFTEKSKHFAEELLNGYKEVATNAGVKDVETRLEFGSPKSIIPKKLAHEINADLIMSGTSGLNAVERFIVGSVSESIVRHAPCDVLVVRTEELPADFQPQVATTQLREKYQN</sequence>
<comment type="subcellular location">
    <subcellularLocation>
        <location evidence="1">Cytoplasm</location>
    </subcellularLocation>
</comment>
<comment type="similarity">
    <text evidence="2">Belongs to the universal stress protein A family.</text>
</comment>
<proteinExistence type="inferred from homology"/>
<protein>
    <recommendedName>
        <fullName>Putative universal stress protein SAV1710</fullName>
    </recommendedName>
</protein>
<dbReference type="EMBL" id="BA000017">
    <property type="protein sequence ID" value="BAB57872.1"/>
    <property type="molecule type" value="Genomic_DNA"/>
</dbReference>
<dbReference type="RefSeq" id="WP_000634175.1">
    <property type="nucleotide sequence ID" value="NC_002758.2"/>
</dbReference>
<dbReference type="SMR" id="Q99TF3"/>
<dbReference type="KEGG" id="sav:SAV1710"/>
<dbReference type="HOGENOM" id="CLU_049301_16_0_9"/>
<dbReference type="PhylomeDB" id="Q99TF3"/>
<dbReference type="Proteomes" id="UP000002481">
    <property type="component" value="Chromosome"/>
</dbReference>
<dbReference type="GO" id="GO:0005737">
    <property type="term" value="C:cytoplasm"/>
    <property type="evidence" value="ECO:0007669"/>
    <property type="project" value="UniProtKB-SubCell"/>
</dbReference>
<dbReference type="CDD" id="cd00293">
    <property type="entry name" value="USP-like"/>
    <property type="match status" value="1"/>
</dbReference>
<dbReference type="Gene3D" id="3.40.50.620">
    <property type="entry name" value="HUPs"/>
    <property type="match status" value="1"/>
</dbReference>
<dbReference type="InterPro" id="IPR014729">
    <property type="entry name" value="Rossmann-like_a/b/a_fold"/>
</dbReference>
<dbReference type="InterPro" id="IPR006015">
    <property type="entry name" value="Universal_stress_UspA"/>
</dbReference>
<dbReference type="InterPro" id="IPR006016">
    <property type="entry name" value="UspA"/>
</dbReference>
<dbReference type="PANTHER" id="PTHR46268">
    <property type="entry name" value="STRESS RESPONSE PROTEIN NHAX"/>
    <property type="match status" value="1"/>
</dbReference>
<dbReference type="PANTHER" id="PTHR46268:SF6">
    <property type="entry name" value="UNIVERSAL STRESS PROTEIN UP12"/>
    <property type="match status" value="1"/>
</dbReference>
<dbReference type="Pfam" id="PF00582">
    <property type="entry name" value="Usp"/>
    <property type="match status" value="1"/>
</dbReference>
<dbReference type="PIRSF" id="PIRSF006276">
    <property type="entry name" value="UspA"/>
    <property type="match status" value="1"/>
</dbReference>
<dbReference type="PRINTS" id="PR01438">
    <property type="entry name" value="UNVRSLSTRESS"/>
</dbReference>
<dbReference type="SUPFAM" id="SSF52402">
    <property type="entry name" value="Adenine nucleotide alpha hydrolases-like"/>
    <property type="match status" value="1"/>
</dbReference>
<name>Y1710_STAAM</name>
<keyword id="KW-0963">Cytoplasm</keyword>
<organism>
    <name type="scientific">Staphylococcus aureus (strain Mu50 / ATCC 700699)</name>
    <dbReference type="NCBI Taxonomy" id="158878"/>
    <lineage>
        <taxon>Bacteria</taxon>
        <taxon>Bacillati</taxon>
        <taxon>Bacillota</taxon>
        <taxon>Bacilli</taxon>
        <taxon>Bacillales</taxon>
        <taxon>Staphylococcaceae</taxon>
        <taxon>Staphylococcus</taxon>
    </lineage>
</organism>
<evidence type="ECO:0000250" key="1"/>
<evidence type="ECO:0000305" key="2"/>
<reference key="1">
    <citation type="journal article" date="2001" name="Lancet">
        <title>Whole genome sequencing of meticillin-resistant Staphylococcus aureus.</title>
        <authorList>
            <person name="Kuroda M."/>
            <person name="Ohta T."/>
            <person name="Uchiyama I."/>
            <person name="Baba T."/>
            <person name="Yuzawa H."/>
            <person name="Kobayashi I."/>
            <person name="Cui L."/>
            <person name="Oguchi A."/>
            <person name="Aoki K."/>
            <person name="Nagai Y."/>
            <person name="Lian J.-Q."/>
            <person name="Ito T."/>
            <person name="Kanamori M."/>
            <person name="Matsumaru H."/>
            <person name="Maruyama A."/>
            <person name="Murakami H."/>
            <person name="Hosoyama A."/>
            <person name="Mizutani-Ui Y."/>
            <person name="Takahashi N.K."/>
            <person name="Sawano T."/>
            <person name="Inoue R."/>
            <person name="Kaito C."/>
            <person name="Sekimizu K."/>
            <person name="Hirakawa H."/>
            <person name="Kuhara S."/>
            <person name="Goto S."/>
            <person name="Yabuzaki J."/>
            <person name="Kanehisa M."/>
            <person name="Yamashita A."/>
            <person name="Oshima K."/>
            <person name="Furuya K."/>
            <person name="Yoshino C."/>
            <person name="Shiba T."/>
            <person name="Hattori M."/>
            <person name="Ogasawara N."/>
            <person name="Hayashi H."/>
            <person name="Hiramatsu K."/>
        </authorList>
    </citation>
    <scope>NUCLEOTIDE SEQUENCE [LARGE SCALE GENOMIC DNA]</scope>
    <source>
        <strain>Mu50 / ATCC 700699</strain>
    </source>
</reference>